<dbReference type="EC" id="3.1.3.24"/>
<dbReference type="EMBL" id="AY729656">
    <property type="protein sequence ID" value="AAW32903.1"/>
    <property type="molecule type" value="mRNA"/>
</dbReference>
<dbReference type="RefSeq" id="NP_001312971.1">
    <property type="nucleotide sequence ID" value="NM_001326042.1"/>
</dbReference>
<dbReference type="SMR" id="Q5IH13"/>
<dbReference type="STRING" id="4097.Q5IH13"/>
<dbReference type="PaxDb" id="4097-Q5IH13"/>
<dbReference type="ProMEX" id="Q5IH13"/>
<dbReference type="GeneID" id="107819363"/>
<dbReference type="KEGG" id="nta:107819363"/>
<dbReference type="OrthoDB" id="531008at2759"/>
<dbReference type="UniPathway" id="UPA00371">
    <property type="reaction ID" value="UER00546"/>
</dbReference>
<dbReference type="Proteomes" id="UP000084051">
    <property type="component" value="Unplaced"/>
</dbReference>
<dbReference type="GO" id="GO:0000287">
    <property type="term" value="F:magnesium ion binding"/>
    <property type="evidence" value="ECO:0007669"/>
    <property type="project" value="InterPro"/>
</dbReference>
<dbReference type="GO" id="GO:0050307">
    <property type="term" value="F:sucrose-phosphate phosphatase activity"/>
    <property type="evidence" value="ECO:0007669"/>
    <property type="project" value="UniProtKB-EC"/>
</dbReference>
<dbReference type="GO" id="GO:0005986">
    <property type="term" value="P:sucrose biosynthetic process"/>
    <property type="evidence" value="ECO:0007669"/>
    <property type="project" value="UniProtKB-UniPathway"/>
</dbReference>
<dbReference type="CDD" id="cd02605">
    <property type="entry name" value="HAD_SPP"/>
    <property type="match status" value="1"/>
</dbReference>
<dbReference type="Gene3D" id="3.10.450.50">
    <property type="match status" value="1"/>
</dbReference>
<dbReference type="Gene3D" id="3.90.1070.10">
    <property type="match status" value="1"/>
</dbReference>
<dbReference type="Gene3D" id="3.40.50.1000">
    <property type="entry name" value="HAD superfamily/HAD-like"/>
    <property type="match status" value="1"/>
</dbReference>
<dbReference type="InterPro" id="IPR036412">
    <property type="entry name" value="HAD-like_sf"/>
</dbReference>
<dbReference type="InterPro" id="IPR006379">
    <property type="entry name" value="HAD-SF_hydro_IIB"/>
</dbReference>
<dbReference type="InterPro" id="IPR023214">
    <property type="entry name" value="HAD_sf"/>
</dbReference>
<dbReference type="InterPro" id="IPR032710">
    <property type="entry name" value="NTF2-like_dom_sf"/>
</dbReference>
<dbReference type="InterPro" id="IPR006380">
    <property type="entry name" value="SPP-like_dom"/>
</dbReference>
<dbReference type="InterPro" id="IPR013679">
    <property type="entry name" value="SPP_C"/>
</dbReference>
<dbReference type="InterPro" id="IPR051518">
    <property type="entry name" value="Sucrose_Phosphatase"/>
</dbReference>
<dbReference type="InterPro" id="IPR012847">
    <property type="entry name" value="Sucrose_phosphatase_pln/cyn"/>
</dbReference>
<dbReference type="NCBIfam" id="TIGR01484">
    <property type="entry name" value="HAD-SF-IIB"/>
    <property type="match status" value="1"/>
</dbReference>
<dbReference type="NCBIfam" id="TIGR01482">
    <property type="entry name" value="SPP-subfamily"/>
    <property type="match status" value="1"/>
</dbReference>
<dbReference type="NCBIfam" id="TIGR01485">
    <property type="entry name" value="SPP_plant-cyano"/>
    <property type="match status" value="1"/>
</dbReference>
<dbReference type="PANTHER" id="PTHR46521:SF9">
    <property type="entry name" value="SUCROSE-PHOSPHATASE 2"/>
    <property type="match status" value="1"/>
</dbReference>
<dbReference type="PANTHER" id="PTHR46521">
    <property type="entry name" value="SUCROSE-PHOSPHATASE 2-RELATED"/>
    <property type="match status" value="1"/>
</dbReference>
<dbReference type="Pfam" id="PF05116">
    <property type="entry name" value="S6PP"/>
    <property type="match status" value="1"/>
</dbReference>
<dbReference type="Pfam" id="PF08472">
    <property type="entry name" value="S6PP_C"/>
    <property type="match status" value="1"/>
</dbReference>
<dbReference type="SFLD" id="SFLDG01140">
    <property type="entry name" value="C2.B:_Phosphomannomutase_and_P"/>
    <property type="match status" value="1"/>
</dbReference>
<dbReference type="SFLD" id="SFLDF00043">
    <property type="entry name" value="sucrose-phosphatase"/>
    <property type="match status" value="1"/>
</dbReference>
<dbReference type="SUPFAM" id="SSF56784">
    <property type="entry name" value="HAD-like"/>
    <property type="match status" value="1"/>
</dbReference>
<dbReference type="SUPFAM" id="SSF54427">
    <property type="entry name" value="NTF2-like"/>
    <property type="match status" value="1"/>
</dbReference>
<evidence type="ECO:0000250" key="1"/>
<evidence type="ECO:0000269" key="2">
    <source>
    </source>
</evidence>
<evidence type="ECO:0000305" key="3"/>
<comment type="function">
    <text evidence="2">Catalyzes the final step of sucrose synthesis.</text>
</comment>
<comment type="catalytic activity">
    <reaction>
        <text>sucrose 6(F)-phosphate + H2O = sucrose + phosphate</text>
        <dbReference type="Rhea" id="RHEA:19289"/>
        <dbReference type="ChEBI" id="CHEBI:15377"/>
        <dbReference type="ChEBI" id="CHEBI:17992"/>
        <dbReference type="ChEBI" id="CHEBI:43474"/>
        <dbReference type="ChEBI" id="CHEBI:57723"/>
        <dbReference type="EC" id="3.1.3.24"/>
    </reaction>
</comment>
<comment type="cofactor">
    <cofactor evidence="1">
        <name>Mg(2+)</name>
        <dbReference type="ChEBI" id="CHEBI:18420"/>
    </cofactor>
</comment>
<comment type="activity regulation">
    <text evidence="2">Inhibited by EDTA.</text>
</comment>
<comment type="pathway">
    <text>Glycan biosynthesis; sucrose biosynthesis; sucrose from D-fructose 6-phosphate and UDP-alpha-D-glucose: step 2/2.</text>
</comment>
<comment type="subunit">
    <text evidence="1">Homodimer.</text>
</comment>
<comment type="disruption phenotype">
    <text evidence="2">Plants show chlorosis, inhibition of photosynthesis, reduced growth rate and altered photosynthetic carbon partitioning in favor of starch.</text>
</comment>
<comment type="similarity">
    <text evidence="3">Belongs to the sucrose phosphatase family.</text>
</comment>
<proteinExistence type="evidence at transcript level"/>
<organism>
    <name type="scientific">Nicotiana tabacum</name>
    <name type="common">Common tobacco</name>
    <dbReference type="NCBI Taxonomy" id="4097"/>
    <lineage>
        <taxon>Eukaryota</taxon>
        <taxon>Viridiplantae</taxon>
        <taxon>Streptophyta</taxon>
        <taxon>Embryophyta</taxon>
        <taxon>Tracheophyta</taxon>
        <taxon>Spermatophyta</taxon>
        <taxon>Magnoliopsida</taxon>
        <taxon>eudicotyledons</taxon>
        <taxon>Gunneridae</taxon>
        <taxon>Pentapetalae</taxon>
        <taxon>asterids</taxon>
        <taxon>lamiids</taxon>
        <taxon>Solanales</taxon>
        <taxon>Solanaceae</taxon>
        <taxon>Nicotianoideae</taxon>
        <taxon>Nicotianeae</taxon>
        <taxon>Nicotiana</taxon>
    </lineage>
</organism>
<protein>
    <recommendedName>
        <fullName>Sucrose-phosphatase 2</fullName>
        <shortName>NtSPP2</shortName>
        <ecNumber>3.1.3.24</ecNumber>
    </recommendedName>
</protein>
<keyword id="KW-0378">Hydrolase</keyword>
<keyword id="KW-0460">Magnesium</keyword>
<keyword id="KW-1185">Reference proteome</keyword>
<feature type="chain" id="PRO_0000350623" description="Sucrose-phosphatase 2">
    <location>
        <begin position="1"/>
        <end position="425"/>
    </location>
</feature>
<gene>
    <name type="primary">SPP2</name>
</gene>
<reference key="1">
    <citation type="journal article" date="2005" name="Planta">
        <title>Decreased sucrose-6-phosphate phosphatase level in transgenic tobacco inhibits photosynthesis, alters carbohydrate partitioning, and reduces growth.</title>
        <authorList>
            <person name="Chen S."/>
            <person name="Hajirezaei M."/>
            <person name="Peisker M."/>
            <person name="Tschiersch H."/>
            <person name="Sonnewald U."/>
            <person name="Boernke F."/>
        </authorList>
    </citation>
    <scope>NUCLEOTIDE SEQUENCE [MRNA]</scope>
    <scope>FUNCTION</scope>
    <scope>ACTIVITY REGULATION</scope>
    <scope>DISRUPTION PHENOTYPE</scope>
    <source>
        <strain>cv. Samsun NN</strain>
    </source>
</reference>
<accession>Q5IH13</accession>
<name>SPP2_TOBAC</name>
<sequence length="425" mass="47784">MDQLTSAARLMIVSDLDHTMVDHHDAENLSLLRFNALWEANYRDNSLLVFSTGRSPTLYKELRKEKPMLTPDITIMSVGTEITYGNSVVPDDGWEAFLNNKWDRKIVTEETSKFPELTLQSETEQRPHKVSFYVQKDKAQDIMKTLSKRFEERGLDVKIIYSGGMDLDILPQGAGKGQALAYLLKKLKSEGKLPNNTLACGDSGNDAELFSIPDVYGVMVANAQEELLQWHAANAKNNPKVIHATERCAAGIIQAIGHSNLGPSTSPRDVMDLSDCKMENFVPAYEVVKFYLFFEKWRRGEIEHSEHYLSNLKAVCRPSGTFVHPSGVEKSLQECVTLFGTCHGDKQGKQFRIWVDQVLPVQVGSDSWLVSFKKWELSGEDRRCCITTVLLSSKNKTVADGLTWTHVHQTWLNGAAASDSASWFF</sequence>